<reference key="1">
    <citation type="journal article" date="1997" name="Nature">
        <title>Genomic sequence of a Lyme disease spirochaete, Borrelia burgdorferi.</title>
        <authorList>
            <person name="Fraser C.M."/>
            <person name="Casjens S."/>
            <person name="Huang W.M."/>
            <person name="Sutton G.G."/>
            <person name="Clayton R.A."/>
            <person name="Lathigra R."/>
            <person name="White O."/>
            <person name="Ketchum K.A."/>
            <person name="Dodson R.J."/>
            <person name="Hickey E.K."/>
            <person name="Gwinn M.L."/>
            <person name="Dougherty B.A."/>
            <person name="Tomb J.-F."/>
            <person name="Fleischmann R.D."/>
            <person name="Richardson D.L."/>
            <person name="Peterson J.D."/>
            <person name="Kerlavage A.R."/>
            <person name="Quackenbush J."/>
            <person name="Salzberg S.L."/>
            <person name="Hanson M."/>
            <person name="van Vugt R."/>
            <person name="Palmer N."/>
            <person name="Adams M.D."/>
            <person name="Gocayne J.D."/>
            <person name="Weidman J.F."/>
            <person name="Utterback T.R."/>
            <person name="Watthey L."/>
            <person name="McDonald L.A."/>
            <person name="Artiach P."/>
            <person name="Bowman C."/>
            <person name="Garland S.A."/>
            <person name="Fujii C."/>
            <person name="Cotton M.D."/>
            <person name="Horst K."/>
            <person name="Roberts K.M."/>
            <person name="Hatch B."/>
            <person name="Smith H.O."/>
            <person name="Venter J.C."/>
        </authorList>
    </citation>
    <scope>NUCLEOTIDE SEQUENCE [LARGE SCALE GENOMIC DNA]</scope>
    <source>
        <strain>ATCC 35210 / DSM 4680 / CIP 102532 / B31</strain>
    </source>
</reference>
<proteinExistence type="inferred from homology"/>
<comment type="function">
    <text evidence="1">Removes the N-terminal methionine from nascent proteins. The N-terminal methionine is often cleaved when the second residue in the primary sequence is small and uncharged (Met-Ala-, Cys, Gly, Pro, Ser, Thr, or Val). Requires deformylation of the N(alpha)-formylated initiator methionine before it can be hydrolyzed.</text>
</comment>
<comment type="catalytic activity">
    <reaction evidence="1">
        <text>Release of N-terminal amino acids, preferentially methionine, from peptides and arylamides.</text>
        <dbReference type="EC" id="3.4.11.18"/>
    </reaction>
</comment>
<comment type="cofactor">
    <cofactor evidence="1">
        <name>Co(2+)</name>
        <dbReference type="ChEBI" id="CHEBI:48828"/>
    </cofactor>
    <cofactor evidence="1">
        <name>Zn(2+)</name>
        <dbReference type="ChEBI" id="CHEBI:29105"/>
    </cofactor>
    <cofactor evidence="1">
        <name>Mn(2+)</name>
        <dbReference type="ChEBI" id="CHEBI:29035"/>
    </cofactor>
    <cofactor evidence="1">
        <name>Fe(2+)</name>
        <dbReference type="ChEBI" id="CHEBI:29033"/>
    </cofactor>
    <text evidence="1">Binds 2 divalent metal cations per subunit. Has a high-affinity and a low affinity metal-binding site. The true nature of the physiological cofactor is under debate. The enzyme is active with cobalt, zinc, manganese or divalent iron ions. Most likely, methionine aminopeptidases function as mononuclear Fe(2+)-metalloproteases under physiological conditions, and the catalytically relevant metal-binding site has been assigned to the histidine-containing high-affinity site.</text>
</comment>
<comment type="subunit">
    <text evidence="1">Monomer.</text>
</comment>
<comment type="similarity">
    <text evidence="1">Belongs to the peptidase M24A family. Methionine aminopeptidase type 1 subfamily.</text>
</comment>
<dbReference type="EC" id="3.4.11.18" evidence="1"/>
<dbReference type="EMBL" id="AE000783">
    <property type="protein sequence ID" value="AAC66499.1"/>
    <property type="molecule type" value="Genomic_DNA"/>
</dbReference>
<dbReference type="PIR" id="A70113">
    <property type="entry name" value="A70113"/>
</dbReference>
<dbReference type="RefSeq" id="NP_212239.1">
    <property type="nucleotide sequence ID" value="NC_001318.1"/>
</dbReference>
<dbReference type="RefSeq" id="WP_010889683.1">
    <property type="nucleotide sequence ID" value="NC_001318.1"/>
</dbReference>
<dbReference type="SMR" id="O51132"/>
<dbReference type="STRING" id="224326.BB_0105"/>
<dbReference type="PaxDb" id="224326-BB_0105"/>
<dbReference type="EnsemblBacteria" id="AAC66499">
    <property type="protein sequence ID" value="AAC66499"/>
    <property type="gene ID" value="BB_0105"/>
</dbReference>
<dbReference type="KEGG" id="bbu:BB_0105"/>
<dbReference type="PATRIC" id="fig|224326.49.peg.503"/>
<dbReference type="HOGENOM" id="CLU_015857_0_1_12"/>
<dbReference type="OrthoDB" id="9802055at2"/>
<dbReference type="Proteomes" id="UP000001807">
    <property type="component" value="Chromosome"/>
</dbReference>
<dbReference type="GO" id="GO:0005829">
    <property type="term" value="C:cytosol"/>
    <property type="evidence" value="ECO:0007669"/>
    <property type="project" value="TreeGrafter"/>
</dbReference>
<dbReference type="GO" id="GO:0004239">
    <property type="term" value="F:initiator methionyl aminopeptidase activity"/>
    <property type="evidence" value="ECO:0007669"/>
    <property type="project" value="UniProtKB-UniRule"/>
</dbReference>
<dbReference type="GO" id="GO:0046872">
    <property type="term" value="F:metal ion binding"/>
    <property type="evidence" value="ECO:0007669"/>
    <property type="project" value="UniProtKB-UniRule"/>
</dbReference>
<dbReference type="GO" id="GO:0070006">
    <property type="term" value="F:metalloaminopeptidase activity"/>
    <property type="evidence" value="ECO:0007669"/>
    <property type="project" value="UniProtKB-UniRule"/>
</dbReference>
<dbReference type="GO" id="GO:0006508">
    <property type="term" value="P:proteolysis"/>
    <property type="evidence" value="ECO:0007669"/>
    <property type="project" value="UniProtKB-KW"/>
</dbReference>
<dbReference type="CDD" id="cd01086">
    <property type="entry name" value="MetAP1"/>
    <property type="match status" value="1"/>
</dbReference>
<dbReference type="Gene3D" id="3.90.230.10">
    <property type="entry name" value="Creatinase/methionine aminopeptidase superfamily"/>
    <property type="match status" value="1"/>
</dbReference>
<dbReference type="HAMAP" id="MF_01974">
    <property type="entry name" value="MetAP_1"/>
    <property type="match status" value="1"/>
</dbReference>
<dbReference type="InterPro" id="IPR036005">
    <property type="entry name" value="Creatinase/aminopeptidase-like"/>
</dbReference>
<dbReference type="InterPro" id="IPR000994">
    <property type="entry name" value="Pept_M24"/>
</dbReference>
<dbReference type="InterPro" id="IPR001714">
    <property type="entry name" value="Pept_M24_MAP"/>
</dbReference>
<dbReference type="InterPro" id="IPR002467">
    <property type="entry name" value="Pept_M24A_MAP1"/>
</dbReference>
<dbReference type="NCBIfam" id="TIGR00500">
    <property type="entry name" value="met_pdase_I"/>
    <property type="match status" value="1"/>
</dbReference>
<dbReference type="PANTHER" id="PTHR43330">
    <property type="entry name" value="METHIONINE AMINOPEPTIDASE"/>
    <property type="match status" value="1"/>
</dbReference>
<dbReference type="PANTHER" id="PTHR43330:SF27">
    <property type="entry name" value="METHIONINE AMINOPEPTIDASE"/>
    <property type="match status" value="1"/>
</dbReference>
<dbReference type="Pfam" id="PF00557">
    <property type="entry name" value="Peptidase_M24"/>
    <property type="match status" value="1"/>
</dbReference>
<dbReference type="PRINTS" id="PR00599">
    <property type="entry name" value="MAPEPTIDASE"/>
</dbReference>
<dbReference type="SUPFAM" id="SSF55920">
    <property type="entry name" value="Creatinase/aminopeptidase"/>
    <property type="match status" value="1"/>
</dbReference>
<dbReference type="PROSITE" id="PS00680">
    <property type="entry name" value="MAP_1"/>
    <property type="match status" value="1"/>
</dbReference>
<name>MAP1_BORBU</name>
<sequence>MTKLRLKSKDEIKKIKASASLLALTLLEVERNIVPGISTKELDLIAYDFIIKNRAKPAFKGYRGFKGTICASVNEEVIHGIPGKRKLADGDIVSIDCGVILDGFYSDMAKTFKVGNVDSSIDKLLEVTNASLYKGIAEMKVGNRILNISKAIEDYIKPFGFGIVREYTGHGVGFELHEEPSVPNYYAPFFKNIRIQEGMVLAIEPMVNLRGHKVSIKSDGWTVFASDLSYSAHFEHTVAVVDGLPLILSEV</sequence>
<organism>
    <name type="scientific">Borreliella burgdorferi (strain ATCC 35210 / DSM 4680 / CIP 102532 / B31)</name>
    <name type="common">Borrelia burgdorferi</name>
    <dbReference type="NCBI Taxonomy" id="224326"/>
    <lineage>
        <taxon>Bacteria</taxon>
        <taxon>Pseudomonadati</taxon>
        <taxon>Spirochaetota</taxon>
        <taxon>Spirochaetia</taxon>
        <taxon>Spirochaetales</taxon>
        <taxon>Borreliaceae</taxon>
        <taxon>Borreliella</taxon>
    </lineage>
</organism>
<keyword id="KW-0031">Aminopeptidase</keyword>
<keyword id="KW-0378">Hydrolase</keyword>
<keyword id="KW-0479">Metal-binding</keyword>
<keyword id="KW-0645">Protease</keyword>
<keyword id="KW-1185">Reference proteome</keyword>
<gene>
    <name evidence="1" type="primary">map</name>
    <name type="ordered locus">BB_0105</name>
</gene>
<accession>O51132</accession>
<evidence type="ECO:0000255" key="1">
    <source>
        <dbReference type="HAMAP-Rule" id="MF_01974"/>
    </source>
</evidence>
<feature type="chain" id="PRO_0000148928" description="Methionine aminopeptidase">
    <location>
        <begin position="1"/>
        <end position="251"/>
    </location>
</feature>
<feature type="binding site" evidence="1">
    <location>
        <position position="79"/>
    </location>
    <ligand>
        <name>substrate</name>
    </ligand>
</feature>
<feature type="binding site" evidence="1">
    <location>
        <position position="96"/>
    </location>
    <ligand>
        <name>a divalent metal cation</name>
        <dbReference type="ChEBI" id="CHEBI:60240"/>
        <label>1</label>
    </ligand>
</feature>
<feature type="binding site" evidence="1">
    <location>
        <position position="107"/>
    </location>
    <ligand>
        <name>a divalent metal cation</name>
        <dbReference type="ChEBI" id="CHEBI:60240"/>
        <label>1</label>
    </ligand>
</feature>
<feature type="binding site" evidence="1">
    <location>
        <position position="107"/>
    </location>
    <ligand>
        <name>a divalent metal cation</name>
        <dbReference type="ChEBI" id="CHEBI:60240"/>
        <label>2</label>
        <note>catalytic</note>
    </ligand>
</feature>
<feature type="binding site" evidence="1">
    <location>
        <position position="170"/>
    </location>
    <ligand>
        <name>a divalent metal cation</name>
        <dbReference type="ChEBI" id="CHEBI:60240"/>
        <label>2</label>
        <note>catalytic</note>
    </ligand>
</feature>
<feature type="binding site" evidence="1">
    <location>
        <position position="177"/>
    </location>
    <ligand>
        <name>substrate</name>
    </ligand>
</feature>
<feature type="binding site" evidence="1">
    <location>
        <position position="204"/>
    </location>
    <ligand>
        <name>a divalent metal cation</name>
        <dbReference type="ChEBI" id="CHEBI:60240"/>
        <label>2</label>
        <note>catalytic</note>
    </ligand>
</feature>
<feature type="binding site" evidence="1">
    <location>
        <position position="235"/>
    </location>
    <ligand>
        <name>a divalent metal cation</name>
        <dbReference type="ChEBI" id="CHEBI:60240"/>
        <label>1</label>
    </ligand>
</feature>
<feature type="binding site" evidence="1">
    <location>
        <position position="235"/>
    </location>
    <ligand>
        <name>a divalent metal cation</name>
        <dbReference type="ChEBI" id="CHEBI:60240"/>
        <label>2</label>
        <note>catalytic</note>
    </ligand>
</feature>
<protein>
    <recommendedName>
        <fullName evidence="1">Methionine aminopeptidase</fullName>
        <shortName evidence="1">MAP</shortName>
        <shortName evidence="1">MetAP</shortName>
        <ecNumber evidence="1">3.4.11.18</ecNumber>
    </recommendedName>
    <alternativeName>
        <fullName evidence="1">Peptidase M</fullName>
    </alternativeName>
</protein>